<dbReference type="EC" id="1.7.-.-"/>
<dbReference type="EMBL" id="CP000255">
    <property type="protein sequence ID" value="ABD22056.1"/>
    <property type="molecule type" value="Genomic_DNA"/>
</dbReference>
<dbReference type="RefSeq" id="WP_000677261.1">
    <property type="nucleotide sequence ID" value="NZ_CP027476.1"/>
</dbReference>
<dbReference type="SMR" id="Q2FJ80"/>
<dbReference type="KEGG" id="saa:SAUSA300_0545"/>
<dbReference type="HOGENOM" id="CLU_055322_1_2_9"/>
<dbReference type="OMA" id="ATHDSDY"/>
<dbReference type="Proteomes" id="UP000001939">
    <property type="component" value="Chromosome"/>
</dbReference>
<dbReference type="GO" id="GO:0005829">
    <property type="term" value="C:cytosol"/>
    <property type="evidence" value="ECO:0007669"/>
    <property type="project" value="TreeGrafter"/>
</dbReference>
<dbReference type="GO" id="GO:0010181">
    <property type="term" value="F:FMN binding"/>
    <property type="evidence" value="ECO:0007669"/>
    <property type="project" value="TreeGrafter"/>
</dbReference>
<dbReference type="GO" id="GO:0016491">
    <property type="term" value="F:oxidoreductase activity"/>
    <property type="evidence" value="ECO:0007669"/>
    <property type="project" value="UniProtKB-KW"/>
</dbReference>
<dbReference type="Gene3D" id="3.40.50.360">
    <property type="match status" value="1"/>
</dbReference>
<dbReference type="InterPro" id="IPR029039">
    <property type="entry name" value="Flavoprotein-like_sf"/>
</dbReference>
<dbReference type="InterPro" id="IPR005025">
    <property type="entry name" value="FMN_Rdtase-like_dom"/>
</dbReference>
<dbReference type="InterPro" id="IPR050712">
    <property type="entry name" value="NAD(P)H-dep_reductase"/>
</dbReference>
<dbReference type="PANTHER" id="PTHR30543">
    <property type="entry name" value="CHROMATE REDUCTASE"/>
    <property type="match status" value="1"/>
</dbReference>
<dbReference type="PANTHER" id="PTHR30543:SF21">
    <property type="entry name" value="NAD(P)H-DEPENDENT FMN REDUCTASE LOT6"/>
    <property type="match status" value="1"/>
</dbReference>
<dbReference type="Pfam" id="PF03358">
    <property type="entry name" value="FMN_red"/>
    <property type="match status" value="1"/>
</dbReference>
<dbReference type="SUPFAM" id="SSF52218">
    <property type="entry name" value="Flavoproteins"/>
    <property type="match status" value="1"/>
</dbReference>
<sequence length="188" mass="20912">MKGLIIIGSAQVNSHTSALARYLTEHFKTHDIEAEIFDLAEKPLNQLDFSGTTPSIDEIKQNMKDLKEKAMAADFLILGTPNYHGSYSGILKNALDHLNMDYFKMKPVGLIGNSGGIVSSEPLSHLRVIVRSLLGIAVPTQIATHDSDFAKNEDGSYYLNDSEFQLRARLFVDQIVSFVNNSPYEHLK</sequence>
<evidence type="ECO:0000250" key="1"/>
<evidence type="ECO:0000305" key="2"/>
<name>AZO1_STAA3</name>
<organism>
    <name type="scientific">Staphylococcus aureus (strain USA300)</name>
    <dbReference type="NCBI Taxonomy" id="367830"/>
    <lineage>
        <taxon>Bacteria</taxon>
        <taxon>Bacillati</taxon>
        <taxon>Bacillota</taxon>
        <taxon>Bacilli</taxon>
        <taxon>Bacillales</taxon>
        <taxon>Staphylococcaceae</taxon>
        <taxon>Staphylococcus</taxon>
    </lineage>
</organism>
<protein>
    <recommendedName>
        <fullName>FMN-dependent NADPH-azoreductase</fullName>
        <ecNumber>1.7.-.-</ecNumber>
    </recommendedName>
    <alternativeName>
        <fullName>NADPH-dependent flavo-azoreductase</fullName>
    </alternativeName>
    <alternativeName>
        <fullName>NADPH-flavin azoreductase</fullName>
    </alternativeName>
</protein>
<accession>Q2FJ80</accession>
<keyword id="KW-0285">Flavoprotein</keyword>
<keyword id="KW-0288">FMN</keyword>
<keyword id="KW-0521">NADP</keyword>
<keyword id="KW-0560">Oxidoreductase</keyword>
<reference key="1">
    <citation type="journal article" date="2006" name="Lancet">
        <title>Complete genome sequence of USA300, an epidemic clone of community-acquired meticillin-resistant Staphylococcus aureus.</title>
        <authorList>
            <person name="Diep B.A."/>
            <person name="Gill S.R."/>
            <person name="Chang R.F."/>
            <person name="Phan T.H."/>
            <person name="Chen J.H."/>
            <person name="Davidson M.G."/>
            <person name="Lin F."/>
            <person name="Lin J."/>
            <person name="Carleton H.A."/>
            <person name="Mongodin E.F."/>
            <person name="Sensabaugh G.F."/>
            <person name="Perdreau-Remington F."/>
        </authorList>
    </citation>
    <scope>NUCLEOTIDE SEQUENCE [LARGE SCALE GENOMIC DNA]</scope>
    <source>
        <strain>USA300</strain>
    </source>
</reference>
<comment type="function">
    <text evidence="1">Catalyzes the reductive cleavage of azo bond in aromatic azo compounds to the corresponding amines. Requires NADPH, but not NADH, as an electron donor for its activity (By similarity).</text>
</comment>
<comment type="cofactor">
    <cofactor evidence="1">
        <name>FMN</name>
        <dbReference type="ChEBI" id="CHEBI:58210"/>
    </cofactor>
</comment>
<comment type="subunit">
    <text evidence="1">Homotetramer.</text>
</comment>
<comment type="similarity">
    <text evidence="2">Belongs to the azoreductase type 2 family.</text>
</comment>
<feature type="chain" id="PRO_0000245988" description="FMN-dependent NADPH-azoreductase">
    <location>
        <begin position="1"/>
        <end position="188"/>
    </location>
</feature>
<gene>
    <name type="primary">azo1</name>
    <name type="ordered locus">SAUSA300_0545</name>
</gene>
<proteinExistence type="inferred from homology"/>